<organism>
    <name type="scientific">Protochlamydia amoebophila (strain UWE25)</name>
    <dbReference type="NCBI Taxonomy" id="264201"/>
    <lineage>
        <taxon>Bacteria</taxon>
        <taxon>Pseudomonadati</taxon>
        <taxon>Chlamydiota</taxon>
        <taxon>Chlamydiia</taxon>
        <taxon>Parachlamydiales</taxon>
        <taxon>Parachlamydiaceae</taxon>
        <taxon>Candidatus Protochlamydia</taxon>
    </lineage>
</organism>
<keyword id="KW-0030">Aminoacyl-tRNA synthetase</keyword>
<keyword id="KW-0067">ATP-binding</keyword>
<keyword id="KW-0963">Cytoplasm</keyword>
<keyword id="KW-0436">Ligase</keyword>
<keyword id="KW-0547">Nucleotide-binding</keyword>
<keyword id="KW-0648">Protein biosynthesis</keyword>
<keyword id="KW-1185">Reference proteome</keyword>
<protein>
    <recommendedName>
        <fullName evidence="1">Proline--tRNA ligase</fullName>
        <ecNumber evidence="1">6.1.1.15</ecNumber>
    </recommendedName>
    <alternativeName>
        <fullName evidence="1">Prolyl-tRNA synthetase</fullName>
        <shortName evidence="1">ProRS</shortName>
    </alternativeName>
</protein>
<proteinExistence type="inferred from homology"/>
<sequence length="507" mass="58247">MTSTKDKTAITPTRENDYPEWYQQVVKASDLAENSPVRGSMVIKPWGYGIWENIQRQLDDRIKETGHENAYFPLFIPLSFLEKEAAHIEGFAKECAVVTHHRLEEKDGRLIPAGPLEEPLIVRPTSETIIGDSFSRWVESYRDLPLLINQWANVVRWEMRPRIFLRTTEFLWQEGHTAHATHEEALQETMTMLEVYRSFVEDVLAIPVIVGEKSPGERFPGAENTFTLEAMMQDRKALQSCTSHYLGQNFAKGSNIRFSNMEGQLEYAYTTSWGMTTRLIGSLIMCHGDDDGLRLPPRIAHKQIVIVPVIPKPELEAQVLEYAENLAAELRKQIFYGKPLTVHIDKRDKRGGEKNWEWVKKGVPLRLEVGPRDINEQAVMVARRDQSPKNKQSLPKQQFVQQAASILEDIQRNYYVQAATYRDQHIYRHLETFEEMRAFFTPKNEEKPEIHGGFVLAKWCGDPVTEEMLSDLKVTIRCLPVKQSGTKGRCILTGREATLDAIFAKSY</sequence>
<feature type="chain" id="PRO_0000249145" description="Proline--tRNA ligase">
    <location>
        <begin position="1"/>
        <end position="507"/>
    </location>
</feature>
<reference key="1">
    <citation type="journal article" date="2004" name="Science">
        <title>Illuminating the evolutionary history of chlamydiae.</title>
        <authorList>
            <person name="Horn M."/>
            <person name="Collingro A."/>
            <person name="Schmitz-Esser S."/>
            <person name="Beier C.L."/>
            <person name="Purkhold U."/>
            <person name="Fartmann B."/>
            <person name="Brandt P."/>
            <person name="Nyakatura G.J."/>
            <person name="Droege M."/>
            <person name="Frishman D."/>
            <person name="Rattei T."/>
            <person name="Mewes H.-W."/>
            <person name="Wagner M."/>
        </authorList>
    </citation>
    <scope>NUCLEOTIDE SEQUENCE [LARGE SCALE GENOMIC DNA]</scope>
    <source>
        <strain>UWE25</strain>
    </source>
</reference>
<name>SYP_PARUW</name>
<dbReference type="EC" id="6.1.1.15" evidence="1"/>
<dbReference type="EMBL" id="BX908798">
    <property type="protein sequence ID" value="CAF24048.1"/>
    <property type="molecule type" value="Genomic_DNA"/>
</dbReference>
<dbReference type="RefSeq" id="WP_011175873.1">
    <property type="nucleotide sequence ID" value="NC_005861.2"/>
</dbReference>
<dbReference type="SMR" id="Q6MBK1"/>
<dbReference type="STRING" id="264201.pc1324"/>
<dbReference type="KEGG" id="pcu:PC_RS06370"/>
<dbReference type="eggNOG" id="COG0442">
    <property type="taxonomic scope" value="Bacteria"/>
</dbReference>
<dbReference type="HOGENOM" id="CLU_001882_4_2_0"/>
<dbReference type="OrthoDB" id="9809052at2"/>
<dbReference type="Proteomes" id="UP000000529">
    <property type="component" value="Chromosome"/>
</dbReference>
<dbReference type="GO" id="GO:0017101">
    <property type="term" value="C:aminoacyl-tRNA synthetase multienzyme complex"/>
    <property type="evidence" value="ECO:0007669"/>
    <property type="project" value="TreeGrafter"/>
</dbReference>
<dbReference type="GO" id="GO:0005737">
    <property type="term" value="C:cytoplasm"/>
    <property type="evidence" value="ECO:0007669"/>
    <property type="project" value="UniProtKB-SubCell"/>
</dbReference>
<dbReference type="GO" id="GO:0005524">
    <property type="term" value="F:ATP binding"/>
    <property type="evidence" value="ECO:0007669"/>
    <property type="project" value="UniProtKB-UniRule"/>
</dbReference>
<dbReference type="GO" id="GO:0004827">
    <property type="term" value="F:proline-tRNA ligase activity"/>
    <property type="evidence" value="ECO:0007669"/>
    <property type="project" value="UniProtKB-UniRule"/>
</dbReference>
<dbReference type="GO" id="GO:0006433">
    <property type="term" value="P:prolyl-tRNA aminoacylation"/>
    <property type="evidence" value="ECO:0007669"/>
    <property type="project" value="UniProtKB-UniRule"/>
</dbReference>
<dbReference type="CDD" id="cd00778">
    <property type="entry name" value="ProRS_core_arch_euk"/>
    <property type="match status" value="1"/>
</dbReference>
<dbReference type="FunFam" id="3.30.930.10:FF:000037">
    <property type="entry name" value="Proline--tRNA ligase"/>
    <property type="match status" value="1"/>
</dbReference>
<dbReference type="Gene3D" id="3.40.50.800">
    <property type="entry name" value="Anticodon-binding domain"/>
    <property type="match status" value="1"/>
</dbReference>
<dbReference type="Gene3D" id="3.30.930.10">
    <property type="entry name" value="Bira Bifunctional Protein, Domain 2"/>
    <property type="match status" value="1"/>
</dbReference>
<dbReference type="Gene3D" id="3.30.110.30">
    <property type="entry name" value="C-terminal domain of ProRS"/>
    <property type="match status" value="1"/>
</dbReference>
<dbReference type="HAMAP" id="MF_01571">
    <property type="entry name" value="Pro_tRNA_synth_type3"/>
    <property type="match status" value="1"/>
</dbReference>
<dbReference type="InterPro" id="IPR002314">
    <property type="entry name" value="aa-tRNA-synt_IIb"/>
</dbReference>
<dbReference type="InterPro" id="IPR006195">
    <property type="entry name" value="aa-tRNA-synth_II"/>
</dbReference>
<dbReference type="InterPro" id="IPR045864">
    <property type="entry name" value="aa-tRNA-synth_II/BPL/LPL"/>
</dbReference>
<dbReference type="InterPro" id="IPR004154">
    <property type="entry name" value="Anticodon-bd"/>
</dbReference>
<dbReference type="InterPro" id="IPR036621">
    <property type="entry name" value="Anticodon-bd_dom_sf"/>
</dbReference>
<dbReference type="InterPro" id="IPR004499">
    <property type="entry name" value="Pro-tRNA-ligase_IIa_arc-type"/>
</dbReference>
<dbReference type="InterPro" id="IPR016061">
    <property type="entry name" value="Pro-tRNA_ligase_II_C"/>
</dbReference>
<dbReference type="InterPro" id="IPR017449">
    <property type="entry name" value="Pro-tRNA_synth_II"/>
</dbReference>
<dbReference type="InterPro" id="IPR033721">
    <property type="entry name" value="ProRS_core_arch_euk"/>
</dbReference>
<dbReference type="NCBIfam" id="TIGR00408">
    <property type="entry name" value="proS_fam_I"/>
    <property type="match status" value="1"/>
</dbReference>
<dbReference type="PANTHER" id="PTHR43382:SF2">
    <property type="entry name" value="BIFUNCTIONAL GLUTAMATE_PROLINE--TRNA LIGASE"/>
    <property type="match status" value="1"/>
</dbReference>
<dbReference type="PANTHER" id="PTHR43382">
    <property type="entry name" value="PROLYL-TRNA SYNTHETASE"/>
    <property type="match status" value="1"/>
</dbReference>
<dbReference type="Pfam" id="PF03129">
    <property type="entry name" value="HGTP_anticodon"/>
    <property type="match status" value="1"/>
</dbReference>
<dbReference type="Pfam" id="PF09180">
    <property type="entry name" value="ProRS-C_1"/>
    <property type="match status" value="1"/>
</dbReference>
<dbReference type="Pfam" id="PF00587">
    <property type="entry name" value="tRNA-synt_2b"/>
    <property type="match status" value="1"/>
</dbReference>
<dbReference type="SMART" id="SM00946">
    <property type="entry name" value="ProRS-C_1"/>
    <property type="match status" value="1"/>
</dbReference>
<dbReference type="SUPFAM" id="SSF64586">
    <property type="entry name" value="C-terminal domain of ProRS"/>
    <property type="match status" value="1"/>
</dbReference>
<dbReference type="SUPFAM" id="SSF52954">
    <property type="entry name" value="Class II aaRS ABD-related"/>
    <property type="match status" value="1"/>
</dbReference>
<dbReference type="SUPFAM" id="SSF55681">
    <property type="entry name" value="Class II aaRS and biotin synthetases"/>
    <property type="match status" value="1"/>
</dbReference>
<dbReference type="PROSITE" id="PS50862">
    <property type="entry name" value="AA_TRNA_LIGASE_II"/>
    <property type="match status" value="1"/>
</dbReference>
<comment type="function">
    <text evidence="1">Catalyzes the attachment of proline to tRNA(Pro) in a two-step reaction: proline is first activated by ATP to form Pro-AMP and then transferred to the acceptor end of tRNA(Pro).</text>
</comment>
<comment type="catalytic activity">
    <reaction evidence="1">
        <text>tRNA(Pro) + L-proline + ATP = L-prolyl-tRNA(Pro) + AMP + diphosphate</text>
        <dbReference type="Rhea" id="RHEA:14305"/>
        <dbReference type="Rhea" id="RHEA-COMP:9700"/>
        <dbReference type="Rhea" id="RHEA-COMP:9702"/>
        <dbReference type="ChEBI" id="CHEBI:30616"/>
        <dbReference type="ChEBI" id="CHEBI:33019"/>
        <dbReference type="ChEBI" id="CHEBI:60039"/>
        <dbReference type="ChEBI" id="CHEBI:78442"/>
        <dbReference type="ChEBI" id="CHEBI:78532"/>
        <dbReference type="ChEBI" id="CHEBI:456215"/>
        <dbReference type="EC" id="6.1.1.15"/>
    </reaction>
</comment>
<comment type="subunit">
    <text evidence="1">Homodimer.</text>
</comment>
<comment type="subcellular location">
    <subcellularLocation>
        <location evidence="1">Cytoplasm</location>
    </subcellularLocation>
</comment>
<comment type="domain">
    <text evidence="1">Consists of three domains: the N-terminal catalytic domain, the anticodon-binding domain and the C-terminal extension.</text>
</comment>
<comment type="similarity">
    <text evidence="1">Belongs to the class-II aminoacyl-tRNA synthetase family. ProS type 3 subfamily.</text>
</comment>
<evidence type="ECO:0000255" key="1">
    <source>
        <dbReference type="HAMAP-Rule" id="MF_01571"/>
    </source>
</evidence>
<accession>Q6MBK1</accession>
<gene>
    <name evidence="1" type="primary">proS</name>
    <name type="ordered locus">pc1324</name>
</gene>